<evidence type="ECO:0000305" key="1"/>
<comment type="similarity">
    <text evidence="1">Belongs to the UPF0473 family.</text>
</comment>
<reference key="1">
    <citation type="journal article" date="2007" name="PLoS ONE">
        <title>Molecular correlates of host specialization in Staphylococcus aureus.</title>
        <authorList>
            <person name="Herron-Olson L."/>
            <person name="Fitzgerald J.R."/>
            <person name="Musser J.M."/>
            <person name="Kapur V."/>
        </authorList>
    </citation>
    <scope>NUCLEOTIDE SEQUENCE [LARGE SCALE GENOMIC DNA]</scope>
    <source>
        <strain>bovine RF122 / ET3-1</strain>
    </source>
</reference>
<proteinExistence type="inferred from homology"/>
<accession>Q2YT63</accession>
<sequence>MTEHNHDSQLEINNEEELLTLFDEEGNEVLYRKVLEFYHPEFKKEYVILAEEGAQSDEDDMIELVPMINEPDESGDGGKLVPIETDEEWDMIEEVVNTEMEE</sequence>
<protein>
    <recommendedName>
        <fullName>UPF0473 protein SAB1486c</fullName>
    </recommendedName>
</protein>
<dbReference type="EMBL" id="AJ938182">
    <property type="protein sequence ID" value="CAI81175.1"/>
    <property type="molecule type" value="Genomic_DNA"/>
</dbReference>
<dbReference type="RefSeq" id="WP_000134779.1">
    <property type="nucleotide sequence ID" value="NC_007622.1"/>
</dbReference>
<dbReference type="KEGG" id="sab:SAB1486c"/>
<dbReference type="HOGENOM" id="CLU_146610_2_1_9"/>
<dbReference type="HAMAP" id="MF_01448">
    <property type="entry name" value="UPF0473"/>
    <property type="match status" value="1"/>
</dbReference>
<dbReference type="InterPro" id="IPR009711">
    <property type="entry name" value="UPF0473"/>
</dbReference>
<dbReference type="NCBIfam" id="NF010214">
    <property type="entry name" value="PRK13678.1-1"/>
    <property type="match status" value="1"/>
</dbReference>
<dbReference type="PANTHER" id="PTHR40066">
    <property type="entry name" value="UPF0473 PROTEIN CBO2561/CLC_2432"/>
    <property type="match status" value="1"/>
</dbReference>
<dbReference type="PANTHER" id="PTHR40066:SF1">
    <property type="entry name" value="UPF0473 PROTEIN CBO2561_CLC_2432"/>
    <property type="match status" value="1"/>
</dbReference>
<dbReference type="Pfam" id="PF06949">
    <property type="entry name" value="DUF1292"/>
    <property type="match status" value="1"/>
</dbReference>
<gene>
    <name type="ordered locus">SAB1486c</name>
</gene>
<feature type="chain" id="PRO_0000299289" description="UPF0473 protein SAB1486c">
    <location>
        <begin position="1"/>
        <end position="102"/>
    </location>
</feature>
<organism>
    <name type="scientific">Staphylococcus aureus (strain bovine RF122 / ET3-1)</name>
    <dbReference type="NCBI Taxonomy" id="273036"/>
    <lineage>
        <taxon>Bacteria</taxon>
        <taxon>Bacillati</taxon>
        <taxon>Bacillota</taxon>
        <taxon>Bacilli</taxon>
        <taxon>Bacillales</taxon>
        <taxon>Staphylococcaceae</taxon>
        <taxon>Staphylococcus</taxon>
    </lineage>
</organism>
<name>Y1486_STAAB</name>